<comment type="function">
    <text evidence="1 2">Terpene synthase; part of the gene cluster that mediates the biosynthesis of the trisnorsesquiterpene discodiene which has a function during later stages of multicellular development, during the transition from fingers to Mexican hats (PubMed:27790999, PubMed:31063135). The terpene synthase tps8 converts its substrate farnesyl diphosphate (FDP) into the bicyclic sesquiterpene alcohol discoidol (PubMed:31063135). The cytochrome P450 monooxygenase cyp521A1 then catalyzes the oxidative degradation of discoidol to form the trisnorsesquiterpene discodiene (PubMed:31063135).</text>
</comment>
<comment type="catalytic activity">
    <reaction evidence="2">
        <text>(2E,6E)-farnesyl diphosphate + H2O = discoidol + diphosphate</text>
        <dbReference type="Rhea" id="RHEA:73987"/>
        <dbReference type="ChEBI" id="CHEBI:15377"/>
        <dbReference type="ChEBI" id="CHEBI:33019"/>
        <dbReference type="ChEBI" id="CHEBI:175763"/>
        <dbReference type="ChEBI" id="CHEBI:192996"/>
    </reaction>
    <physiologicalReaction direction="left-to-right" evidence="2">
        <dbReference type="Rhea" id="RHEA:73988"/>
    </physiologicalReaction>
</comment>
<comment type="pathway">
    <text evidence="2">Sesquiterpene biosynthesis.</text>
</comment>
<comment type="induction">
    <text evidence="1 2">Expression is almost undetectable in vegetatively growing cells (PubMed:27790999, PubMed:31063135). Small amounts of transcripts accumulate between 4-8 hrs of development, continue to accumulate until they peak at 16 hrs, and decline thereafter (PubMed:27790999, PubMed:31063135).</text>
</comment>
<comment type="domain">
    <text evidence="6">Contains several highly conserved motifs that are important for catalytic activity including the aspartate-rich 'DDxx(x)D/E' motif and the 'NDxxSxxxD/E' motif, both of which are involved in complexing metal ions to coordinate the binding of the isoprenyl diphosphate substrate in the active site.</text>
</comment>
<comment type="disruption phenotype">
    <text evidence="2">Impairs the production of discoidol and discodiene, and leads to delayed multicellular development.</text>
</comment>
<comment type="similarity">
    <text evidence="5">Belongs to the terpene synthase family.</text>
</comment>
<dbReference type="EC" id="4.2.3.-" evidence="2"/>
<dbReference type="EMBL" id="KX364381">
    <property type="protein sequence ID" value="APC23392.1"/>
    <property type="molecule type" value="mRNA"/>
</dbReference>
<dbReference type="EMBL" id="AAFI01000293">
    <property type="protein sequence ID" value="EAL60645.1"/>
    <property type="molecule type" value="Genomic_DNA"/>
</dbReference>
<dbReference type="RefSeq" id="XP_629084.1">
    <property type="nucleotide sequence ID" value="XM_629082.1"/>
</dbReference>
<dbReference type="SMR" id="Q54BE5"/>
<dbReference type="STRING" id="44689.Q54BE5"/>
<dbReference type="PaxDb" id="44689-DDB0304480"/>
<dbReference type="KEGG" id="ddi:DDB_G0293666"/>
<dbReference type="dictyBase" id="DDB_G0293666">
    <property type="gene designation" value="tps8"/>
</dbReference>
<dbReference type="VEuPathDB" id="AmoebaDB:DDB_G0293666"/>
<dbReference type="eggNOG" id="ENOG502RHRK">
    <property type="taxonomic scope" value="Eukaryota"/>
</dbReference>
<dbReference type="HOGENOM" id="CLU_892617_0_0_1"/>
<dbReference type="OMA" id="ACAMISH"/>
<dbReference type="PRO" id="PR:Q54BE5"/>
<dbReference type="GO" id="GO:0046872">
    <property type="term" value="F:metal ion binding"/>
    <property type="evidence" value="ECO:0007669"/>
    <property type="project" value="UniProtKB-KW"/>
</dbReference>
<dbReference type="GO" id="GO:0010334">
    <property type="term" value="F:sesquiterpene synthase activity"/>
    <property type="evidence" value="ECO:0000304"/>
    <property type="project" value="dictyBase"/>
</dbReference>
<dbReference type="GO" id="GO:0051762">
    <property type="term" value="P:sesquiterpene biosynthetic process"/>
    <property type="evidence" value="ECO:0000304"/>
    <property type="project" value="dictyBase"/>
</dbReference>
<dbReference type="FunFam" id="1.10.600.10:FF:000078">
    <property type="entry name" value="Terpene synthase"/>
    <property type="match status" value="1"/>
</dbReference>
<dbReference type="Gene3D" id="1.10.600.10">
    <property type="entry name" value="Farnesyl Diphosphate Synthase"/>
    <property type="match status" value="1"/>
</dbReference>
<dbReference type="InterPro" id="IPR008949">
    <property type="entry name" value="Isoprenoid_synthase_dom_sf"/>
</dbReference>
<dbReference type="Pfam" id="PF19086">
    <property type="entry name" value="Terpene_syn_C_2"/>
    <property type="match status" value="1"/>
</dbReference>
<dbReference type="SUPFAM" id="SSF48576">
    <property type="entry name" value="Terpenoid synthases"/>
    <property type="match status" value="1"/>
</dbReference>
<name>TPS8_DICDI</name>
<gene>
    <name evidence="3" type="primary">tps8</name>
    <name type="ORF">DDB0192081</name>
</gene>
<sequence length="312" mass="37305">MDYDIKFTWDKNQFLDQEIRIPKYTLPWDFKSSPFDKDFENQEMEYVKQFFQNYENAVNYVKKNEIGKIAALNFPLGEKDEYMVNSKLLDFLFILDDYIYESRNYEEDYVDNLMDRSSKSHDPFGREIWRLFDEYYRVGVKESVDLLIRDFEYWSRSAIKTNKYKSLNSSLSIEDYFNSRHGDFGMTITASSCTSTLYVENEIRESKNFKKFFKYFELCNLMINDCGSFKMEINEILLTNFVKVRAIQLGSIDLALKYCVGLLNKYIIKVDKYSTKLEQQYPNHSHLKKYIYTLKTFTAGHNKGYGHANRYN</sequence>
<accession>Q54BE5</accession>
<proteinExistence type="evidence at protein level"/>
<protein>
    <recommendedName>
        <fullName evidence="3">Terpene synthase 8</fullName>
        <ecNumber evidence="2">4.2.3.-</ecNumber>
    </recommendedName>
    <alternativeName>
        <fullName evidence="4">Discodiene biosynthesis cluster protein tps8</fullName>
    </alternativeName>
</protein>
<organism>
    <name type="scientific">Dictyostelium discoideum</name>
    <name type="common">Social amoeba</name>
    <dbReference type="NCBI Taxonomy" id="44689"/>
    <lineage>
        <taxon>Eukaryota</taxon>
        <taxon>Amoebozoa</taxon>
        <taxon>Evosea</taxon>
        <taxon>Eumycetozoa</taxon>
        <taxon>Dictyostelia</taxon>
        <taxon>Dictyosteliales</taxon>
        <taxon>Dictyosteliaceae</taxon>
        <taxon>Dictyostelium</taxon>
    </lineage>
</organism>
<keyword id="KW-0456">Lyase</keyword>
<keyword id="KW-0479">Metal-binding</keyword>
<reference key="1">
    <citation type="journal article" date="2016" name="Proc. Natl. Acad. Sci. U.S.A.">
        <title>Terpene synthase genes in eukaryotes beyond plants and fungi: Occurrence in social amoebae.</title>
        <authorList>
            <person name="Chen X."/>
            <person name="Koellner T.G."/>
            <person name="Jia Q."/>
            <person name="Norris A."/>
            <person name="Santhanam B."/>
            <person name="Rabe P."/>
            <person name="Dickschat J.S."/>
            <person name="Shaulsky G."/>
            <person name="Gershenzon J."/>
            <person name="Chen F."/>
        </authorList>
    </citation>
    <scope>NUCLEOTIDE SEQUENCE [MRNA]</scope>
    <scope>INDUCTION</scope>
    <scope>FUNCTION</scope>
    <scope>DOMAIN</scope>
    <source>
        <strain>AX4</strain>
    </source>
</reference>
<reference key="2">
    <citation type="journal article" date="2005" name="Nature">
        <title>The genome of the social amoeba Dictyostelium discoideum.</title>
        <authorList>
            <person name="Eichinger L."/>
            <person name="Pachebat J.A."/>
            <person name="Gloeckner G."/>
            <person name="Rajandream M.A."/>
            <person name="Sucgang R."/>
            <person name="Berriman M."/>
            <person name="Song J."/>
            <person name="Olsen R."/>
            <person name="Szafranski K."/>
            <person name="Xu Q."/>
            <person name="Tunggal B."/>
            <person name="Kummerfeld S."/>
            <person name="Madera M."/>
            <person name="Konfortov B.A."/>
            <person name="Rivero F."/>
            <person name="Bankier A.T."/>
            <person name="Lehmann R."/>
            <person name="Hamlin N."/>
            <person name="Davies R."/>
            <person name="Gaudet P."/>
            <person name="Fey P."/>
            <person name="Pilcher K."/>
            <person name="Chen G."/>
            <person name="Saunders D."/>
            <person name="Sodergren E.J."/>
            <person name="Davis P."/>
            <person name="Kerhornou A."/>
            <person name="Nie X."/>
            <person name="Hall N."/>
            <person name="Anjard C."/>
            <person name="Hemphill L."/>
            <person name="Bason N."/>
            <person name="Farbrother P."/>
            <person name="Desany B."/>
            <person name="Just E."/>
            <person name="Morio T."/>
            <person name="Rost R."/>
            <person name="Churcher C.M."/>
            <person name="Cooper J."/>
            <person name="Haydock S."/>
            <person name="van Driessche N."/>
            <person name="Cronin A."/>
            <person name="Goodhead I."/>
            <person name="Muzny D.M."/>
            <person name="Mourier T."/>
            <person name="Pain A."/>
            <person name="Lu M."/>
            <person name="Harper D."/>
            <person name="Lindsay R."/>
            <person name="Hauser H."/>
            <person name="James K.D."/>
            <person name="Quiles M."/>
            <person name="Madan Babu M."/>
            <person name="Saito T."/>
            <person name="Buchrieser C."/>
            <person name="Wardroper A."/>
            <person name="Felder M."/>
            <person name="Thangavelu M."/>
            <person name="Johnson D."/>
            <person name="Knights A."/>
            <person name="Loulseged H."/>
            <person name="Mungall K.L."/>
            <person name="Oliver K."/>
            <person name="Price C."/>
            <person name="Quail M.A."/>
            <person name="Urushihara H."/>
            <person name="Hernandez J."/>
            <person name="Rabbinowitsch E."/>
            <person name="Steffen D."/>
            <person name="Sanders M."/>
            <person name="Ma J."/>
            <person name="Kohara Y."/>
            <person name="Sharp S."/>
            <person name="Simmonds M.N."/>
            <person name="Spiegler S."/>
            <person name="Tivey A."/>
            <person name="Sugano S."/>
            <person name="White B."/>
            <person name="Walker D."/>
            <person name="Woodward J.R."/>
            <person name="Winckler T."/>
            <person name="Tanaka Y."/>
            <person name="Shaulsky G."/>
            <person name="Schleicher M."/>
            <person name="Weinstock G.M."/>
            <person name="Rosenthal A."/>
            <person name="Cox E.C."/>
            <person name="Chisholm R.L."/>
            <person name="Gibbs R.A."/>
            <person name="Loomis W.F."/>
            <person name="Platzer M."/>
            <person name="Kay R.R."/>
            <person name="Williams J.G."/>
            <person name="Dear P.H."/>
            <person name="Noegel A.A."/>
            <person name="Barrell B.G."/>
            <person name="Kuspa A."/>
        </authorList>
    </citation>
    <scope>NUCLEOTIDE SEQUENCE [LARGE SCALE GENOMIC DNA]</scope>
    <source>
        <strain>AX4</strain>
    </source>
</reference>
<reference key="3">
    <citation type="journal article" date="2019" name="Elife">
        <title>A terpene synthase-cytochrome P450 cluster in Dictyostelium discoideum produces a novel trisnorsesquiterpene.</title>
        <authorList>
            <person name="Chen X."/>
            <person name="Luck K."/>
            <person name="Rabe P."/>
            <person name="Dinh C.Q."/>
            <person name="Shaulsky G."/>
            <person name="Nelson D.R."/>
            <person name="Gershenzon J."/>
            <person name="Dickschat J.S."/>
            <person name="Koellner T.G."/>
            <person name="Chen F."/>
        </authorList>
    </citation>
    <scope>FUNCTION</scope>
    <scope>CATALYTIC ACTIVITY</scope>
    <scope>DISRUPTION PHENOTYPE</scope>
    <scope>PATHWAY</scope>
</reference>
<feature type="chain" id="PRO_0000448097" description="Terpene synthase 8">
    <location>
        <begin position="1"/>
        <end position="312"/>
    </location>
</feature>
<feature type="short sequence motif" description="DDxx(x)D/E motif" evidence="6">
    <location>
        <begin position="96"/>
        <end position="101"/>
    </location>
</feature>
<feature type="short sequence motif" description="NDxxSxxxD/E motif" evidence="6">
    <location>
        <begin position="224"/>
        <end position="232"/>
    </location>
</feature>
<evidence type="ECO:0000269" key="1">
    <source>
    </source>
</evidence>
<evidence type="ECO:0000269" key="2">
    <source>
    </source>
</evidence>
<evidence type="ECO:0000303" key="3">
    <source>
    </source>
</evidence>
<evidence type="ECO:0000303" key="4">
    <source>
    </source>
</evidence>
<evidence type="ECO:0000305" key="5"/>
<evidence type="ECO:0000305" key="6">
    <source>
    </source>
</evidence>